<evidence type="ECO:0000255" key="1">
    <source>
        <dbReference type="HAMAP-Rule" id="MF_01360"/>
    </source>
</evidence>
<name>Y1492_PROMT</name>
<proteinExistence type="inferred from homology"/>
<keyword id="KW-1185">Reference proteome</keyword>
<accession>Q46HP8</accession>
<sequence length="86" mass="9697">MYCIELTIKLSPMPLVVQRKEHGEAKRLYSDVVGSIENGNPRLLELTCEKVEDKRITVLVSEITAVQIYEKTSSSTSKRPGFSLQN</sequence>
<feature type="chain" id="PRO_0000240498" description="UPF0367 protein PMN2A_1492">
    <location>
        <begin position="1"/>
        <end position="86"/>
    </location>
</feature>
<dbReference type="EMBL" id="CP000095">
    <property type="protein sequence ID" value="AAZ58980.1"/>
    <property type="molecule type" value="Genomic_DNA"/>
</dbReference>
<dbReference type="RefSeq" id="WP_011294125.1">
    <property type="nucleotide sequence ID" value="NC_007335.2"/>
</dbReference>
<dbReference type="STRING" id="59920.PMN2A_1492"/>
<dbReference type="KEGG" id="pmn:PMN2A_1492"/>
<dbReference type="HOGENOM" id="CLU_180777_0_0_3"/>
<dbReference type="OrthoDB" id="516864at2"/>
<dbReference type="PhylomeDB" id="Q46HP8"/>
<dbReference type="Proteomes" id="UP000002535">
    <property type="component" value="Chromosome"/>
</dbReference>
<dbReference type="HAMAP" id="MF_01360">
    <property type="entry name" value="UPF0367"/>
    <property type="match status" value="1"/>
</dbReference>
<dbReference type="InterPro" id="IPR020885">
    <property type="entry name" value="UPF0367"/>
</dbReference>
<dbReference type="NCBIfam" id="NF010236">
    <property type="entry name" value="PRK13683.1"/>
    <property type="match status" value="1"/>
</dbReference>
<comment type="similarity">
    <text evidence="1">Belongs to the UPF0367 family.</text>
</comment>
<protein>
    <recommendedName>
        <fullName evidence="1">UPF0367 protein PMN2A_1492</fullName>
    </recommendedName>
</protein>
<organism>
    <name type="scientific">Prochlorococcus marinus (strain NATL2A)</name>
    <dbReference type="NCBI Taxonomy" id="59920"/>
    <lineage>
        <taxon>Bacteria</taxon>
        <taxon>Bacillati</taxon>
        <taxon>Cyanobacteriota</taxon>
        <taxon>Cyanophyceae</taxon>
        <taxon>Synechococcales</taxon>
        <taxon>Prochlorococcaceae</taxon>
        <taxon>Prochlorococcus</taxon>
    </lineage>
</organism>
<reference key="1">
    <citation type="journal article" date="2007" name="PLoS Genet.">
        <title>Patterns and implications of gene gain and loss in the evolution of Prochlorococcus.</title>
        <authorList>
            <person name="Kettler G.C."/>
            <person name="Martiny A.C."/>
            <person name="Huang K."/>
            <person name="Zucker J."/>
            <person name="Coleman M.L."/>
            <person name="Rodrigue S."/>
            <person name="Chen F."/>
            <person name="Lapidus A."/>
            <person name="Ferriera S."/>
            <person name="Johnson J."/>
            <person name="Steglich C."/>
            <person name="Church G.M."/>
            <person name="Richardson P."/>
            <person name="Chisholm S.W."/>
        </authorList>
    </citation>
    <scope>NUCLEOTIDE SEQUENCE [LARGE SCALE GENOMIC DNA]</scope>
    <source>
        <strain>NATL2A</strain>
    </source>
</reference>
<gene>
    <name type="ordered locus">PMN2A_1492</name>
</gene>